<protein>
    <recommendedName>
        <fullName evidence="11">V-type proton ATPase subunit C</fullName>
        <shortName>V-ATPase subunit C</shortName>
    </recommendedName>
    <alternativeName>
        <fullName>V-ATPase 42 kDa subunit</fullName>
    </alternativeName>
    <alternativeName>
        <fullName>Vacuolar proton pump subunit C</fullName>
    </alternativeName>
</protein>
<organism>
    <name type="scientific">Saccharomyces cerevisiae (strain ATCC 204508 / S288c)</name>
    <name type="common">Baker's yeast</name>
    <dbReference type="NCBI Taxonomy" id="559292"/>
    <lineage>
        <taxon>Eukaryota</taxon>
        <taxon>Fungi</taxon>
        <taxon>Dikarya</taxon>
        <taxon>Ascomycota</taxon>
        <taxon>Saccharomycotina</taxon>
        <taxon>Saccharomycetes</taxon>
        <taxon>Saccharomycetales</taxon>
        <taxon>Saccharomycetaceae</taxon>
        <taxon>Saccharomyces</taxon>
    </lineage>
</organism>
<name>VATC_YEAST</name>
<dbReference type="EMBL" id="M77143">
    <property type="protein sequence ID" value="AAA34440.1"/>
    <property type="status" value="ALT_FRAME"/>
    <property type="molecule type" value="Genomic_DNA"/>
</dbReference>
<dbReference type="EMBL" id="X75560">
    <property type="protein sequence ID" value="CAA53237.1"/>
    <property type="molecule type" value="Genomic_DNA"/>
</dbReference>
<dbReference type="EMBL" id="Z28080">
    <property type="protein sequence ID" value="CAA81917.1"/>
    <property type="molecule type" value="Genomic_DNA"/>
</dbReference>
<dbReference type="EMBL" id="BK006944">
    <property type="protein sequence ID" value="DAA09077.1"/>
    <property type="molecule type" value="Genomic_DNA"/>
</dbReference>
<dbReference type="PIR" id="S37905">
    <property type="entry name" value="S37905"/>
</dbReference>
<dbReference type="RefSeq" id="NP_012843.1">
    <property type="nucleotide sequence ID" value="NM_001179646.1"/>
</dbReference>
<dbReference type="PDB" id="1U7L">
    <property type="method" value="X-ray"/>
    <property type="resolution" value="1.75 A"/>
    <property type="chains" value="A=1-392"/>
</dbReference>
<dbReference type="PDB" id="3J9T">
    <property type="method" value="EM"/>
    <property type="resolution" value="6.90 A"/>
    <property type="chains" value="O=1-392"/>
</dbReference>
<dbReference type="PDB" id="3J9U">
    <property type="method" value="EM"/>
    <property type="resolution" value="7.60 A"/>
    <property type="chains" value="O=1-392"/>
</dbReference>
<dbReference type="PDB" id="3J9V">
    <property type="method" value="EM"/>
    <property type="resolution" value="8.30 A"/>
    <property type="chains" value="O=1-392"/>
</dbReference>
<dbReference type="PDB" id="4DL0">
    <property type="method" value="X-ray"/>
    <property type="resolution" value="2.90 A"/>
    <property type="chains" value="C/I=158-277"/>
</dbReference>
<dbReference type="PDB" id="4EFA">
    <property type="method" value="X-ray"/>
    <property type="resolution" value="2.82 A"/>
    <property type="chains" value="C=158-277"/>
</dbReference>
<dbReference type="PDB" id="5VOX">
    <property type="method" value="EM"/>
    <property type="resolution" value="6.80 A"/>
    <property type="chains" value="O=1-392"/>
</dbReference>
<dbReference type="PDB" id="5VOY">
    <property type="method" value="EM"/>
    <property type="resolution" value="7.90 A"/>
    <property type="chains" value="O=1-392"/>
</dbReference>
<dbReference type="PDB" id="5VOZ">
    <property type="method" value="EM"/>
    <property type="resolution" value="7.60 A"/>
    <property type="chains" value="O=1-392"/>
</dbReference>
<dbReference type="PDB" id="6O7V">
    <property type="method" value="EM"/>
    <property type="resolution" value="6.60 A"/>
    <property type="chains" value="O=1-392"/>
</dbReference>
<dbReference type="PDB" id="6O7W">
    <property type="method" value="EM"/>
    <property type="resolution" value="7.00 A"/>
    <property type="chains" value="O=1-392"/>
</dbReference>
<dbReference type="PDB" id="6O7X">
    <property type="method" value="EM"/>
    <property type="resolution" value="8.70 A"/>
    <property type="chains" value="O=1-392"/>
</dbReference>
<dbReference type="PDB" id="7FDA">
    <property type="method" value="EM"/>
    <property type="resolution" value="4.20 A"/>
    <property type="chains" value="O=1-392"/>
</dbReference>
<dbReference type="PDB" id="7FDB">
    <property type="method" value="EM"/>
    <property type="resolution" value="4.80 A"/>
    <property type="chains" value="O=1-392"/>
</dbReference>
<dbReference type="PDB" id="7FDC">
    <property type="method" value="EM"/>
    <property type="resolution" value="6.60 A"/>
    <property type="chains" value="O=1-392"/>
</dbReference>
<dbReference type="PDB" id="7FDE">
    <property type="method" value="EM"/>
    <property type="resolution" value="3.80 A"/>
    <property type="chains" value="O=1-392"/>
</dbReference>
<dbReference type="PDB" id="7TMM">
    <property type="method" value="EM"/>
    <property type="resolution" value="3.50 A"/>
    <property type="chains" value="O=1-392"/>
</dbReference>
<dbReference type="PDB" id="7TMR">
    <property type="method" value="EM"/>
    <property type="resolution" value="3.50 A"/>
    <property type="chains" value="O=1-392"/>
</dbReference>
<dbReference type="PDBsum" id="1U7L"/>
<dbReference type="PDBsum" id="3J9T"/>
<dbReference type="PDBsum" id="3J9U"/>
<dbReference type="PDBsum" id="3J9V"/>
<dbReference type="PDBsum" id="4DL0"/>
<dbReference type="PDBsum" id="4EFA"/>
<dbReference type="PDBsum" id="5VOX"/>
<dbReference type="PDBsum" id="5VOY"/>
<dbReference type="PDBsum" id="5VOZ"/>
<dbReference type="PDBsum" id="6O7V"/>
<dbReference type="PDBsum" id="6O7W"/>
<dbReference type="PDBsum" id="6O7X"/>
<dbReference type="PDBsum" id="7FDA"/>
<dbReference type="PDBsum" id="7FDB"/>
<dbReference type="PDBsum" id="7FDC"/>
<dbReference type="PDBsum" id="7FDE"/>
<dbReference type="PDBsum" id="7TMM"/>
<dbReference type="PDBsum" id="7TMR"/>
<dbReference type="EMDB" id="EMD-0646"/>
<dbReference type="EMDB" id="EMD-0647"/>
<dbReference type="EMDB" id="EMD-0648"/>
<dbReference type="EMDB" id="EMD-31538"/>
<dbReference type="EMDB" id="EMD-31539"/>
<dbReference type="EMDB" id="EMD-31540"/>
<dbReference type="EMDB" id="EMD-31541"/>
<dbReference type="EMDB" id="EMD-8724"/>
<dbReference type="EMDB" id="EMD-8725"/>
<dbReference type="EMDB" id="EMD-8726"/>
<dbReference type="SMR" id="P31412"/>
<dbReference type="BioGRID" id="34052">
    <property type="interactions" value="197"/>
</dbReference>
<dbReference type="ComplexPortal" id="CPX-1192">
    <property type="entry name" value="Vacuolar proton translocating ATPase complex, Golgi variant"/>
</dbReference>
<dbReference type="ComplexPortal" id="CPX-1193">
    <property type="entry name" value="Vacuolar proton translocating ATPase complex, vacuole variant"/>
</dbReference>
<dbReference type="DIP" id="DIP-4701N"/>
<dbReference type="FunCoup" id="P31412">
    <property type="interactions" value="497"/>
</dbReference>
<dbReference type="IntAct" id="P31412">
    <property type="interactions" value="33"/>
</dbReference>
<dbReference type="MINT" id="P31412"/>
<dbReference type="STRING" id="4932.YKL080W"/>
<dbReference type="TCDB" id="3.A.2.2.3">
    <property type="family name" value="the h+- or na+-translocating f-type, v-type and a-type atpase (f-atpase) superfamily"/>
</dbReference>
<dbReference type="iPTMnet" id="P31412"/>
<dbReference type="PaxDb" id="4932-YKL080W"/>
<dbReference type="PeptideAtlas" id="P31412"/>
<dbReference type="EnsemblFungi" id="YKL080W_mRNA">
    <property type="protein sequence ID" value="YKL080W"/>
    <property type="gene ID" value="YKL080W"/>
</dbReference>
<dbReference type="GeneID" id="853782"/>
<dbReference type="KEGG" id="sce:YKL080W"/>
<dbReference type="AGR" id="SGD:S000001563"/>
<dbReference type="SGD" id="S000001563">
    <property type="gene designation" value="VMA5"/>
</dbReference>
<dbReference type="VEuPathDB" id="FungiDB:YKL080W"/>
<dbReference type="eggNOG" id="KOG2909">
    <property type="taxonomic scope" value="Eukaryota"/>
</dbReference>
<dbReference type="GeneTree" id="ENSGT00390000004263"/>
<dbReference type="HOGENOM" id="CLU_017554_3_0_1"/>
<dbReference type="InParanoid" id="P31412"/>
<dbReference type="OMA" id="VMIWIHV"/>
<dbReference type="OrthoDB" id="6605928at2759"/>
<dbReference type="BioCyc" id="YEAST:G3O-31875-MONOMER"/>
<dbReference type="Reactome" id="R-SCE-1222556">
    <property type="pathway name" value="ROS and RNS production in phagocytes"/>
</dbReference>
<dbReference type="Reactome" id="R-SCE-77387">
    <property type="pathway name" value="Insulin receptor recycling"/>
</dbReference>
<dbReference type="Reactome" id="R-SCE-917977">
    <property type="pathway name" value="Transferrin endocytosis and recycling"/>
</dbReference>
<dbReference type="Reactome" id="R-SCE-9639288">
    <property type="pathway name" value="Amino acids regulate mTORC1"/>
</dbReference>
<dbReference type="BioGRID-ORCS" id="853782">
    <property type="hits" value="8 hits in 10 CRISPR screens"/>
</dbReference>
<dbReference type="EvolutionaryTrace" id="P31412"/>
<dbReference type="PRO" id="PR:P31412"/>
<dbReference type="Proteomes" id="UP000002311">
    <property type="component" value="Chromosome XI"/>
</dbReference>
<dbReference type="RNAct" id="P31412">
    <property type="molecule type" value="protein"/>
</dbReference>
<dbReference type="GO" id="GO:0000329">
    <property type="term" value="C:fungal-type vacuole membrane"/>
    <property type="evidence" value="ECO:0007005"/>
    <property type="project" value="SGD"/>
</dbReference>
<dbReference type="GO" id="GO:0000139">
    <property type="term" value="C:Golgi membrane"/>
    <property type="evidence" value="ECO:0000303"/>
    <property type="project" value="ComplexPortal"/>
</dbReference>
<dbReference type="GO" id="GO:0033176">
    <property type="term" value="C:proton-transporting V-type ATPase complex"/>
    <property type="evidence" value="ECO:0000353"/>
    <property type="project" value="ComplexPortal"/>
</dbReference>
<dbReference type="GO" id="GO:0016471">
    <property type="term" value="C:vacuolar proton-transporting V-type ATPase complex"/>
    <property type="evidence" value="ECO:0000353"/>
    <property type="project" value="ComplexPortal"/>
</dbReference>
<dbReference type="GO" id="GO:0000221">
    <property type="term" value="C:vacuolar proton-transporting V-type ATPase, V1 domain"/>
    <property type="evidence" value="ECO:0000314"/>
    <property type="project" value="UniProtKB"/>
</dbReference>
<dbReference type="GO" id="GO:0005524">
    <property type="term" value="F:ATP binding"/>
    <property type="evidence" value="ECO:0007669"/>
    <property type="project" value="UniProtKB-KW"/>
</dbReference>
<dbReference type="GO" id="GO:0046961">
    <property type="term" value="F:proton-transporting ATPase activity, rotational mechanism"/>
    <property type="evidence" value="ECO:0000318"/>
    <property type="project" value="GO_Central"/>
</dbReference>
<dbReference type="GO" id="GO:0048388">
    <property type="term" value="P:endosomal lumen acidification"/>
    <property type="evidence" value="ECO:0000303"/>
    <property type="project" value="ComplexPortal"/>
</dbReference>
<dbReference type="GO" id="GO:0061795">
    <property type="term" value="P:Golgi lumen acidification"/>
    <property type="evidence" value="ECO:0000303"/>
    <property type="project" value="ComplexPortal"/>
</dbReference>
<dbReference type="GO" id="GO:1902600">
    <property type="term" value="P:proton transmembrane transport"/>
    <property type="evidence" value="ECO:0000314"/>
    <property type="project" value="ComplexPortal"/>
</dbReference>
<dbReference type="GO" id="GO:0007035">
    <property type="term" value="P:vacuolar acidification"/>
    <property type="evidence" value="ECO:0000304"/>
    <property type="project" value="SGD"/>
</dbReference>
<dbReference type="CDD" id="cd14785">
    <property type="entry name" value="V-ATPase_C"/>
    <property type="match status" value="1"/>
</dbReference>
<dbReference type="FunFam" id="3.30.70.100:FF:000002">
    <property type="entry name" value="V-type proton ATPase subunit C"/>
    <property type="match status" value="1"/>
</dbReference>
<dbReference type="FunFam" id="3.30.70.1180:FF:000004">
    <property type="entry name" value="V-type proton ATPase subunit C"/>
    <property type="match status" value="2"/>
</dbReference>
<dbReference type="Gene3D" id="3.30.70.100">
    <property type="match status" value="1"/>
</dbReference>
<dbReference type="Gene3D" id="1.20.1460.10">
    <property type="entry name" value="subunit c (vma5p) of the yeast v-atpase, domain 2"/>
    <property type="match status" value="1"/>
</dbReference>
<dbReference type="Gene3D" id="3.30.70.1180">
    <property type="entry name" value="Vacuolar atp synthase subunit c, domain 1"/>
    <property type="match status" value="1"/>
</dbReference>
<dbReference type="InterPro" id="IPR004907">
    <property type="entry name" value="ATPase_V1-cplx_csu"/>
</dbReference>
<dbReference type="InterPro" id="IPR036132">
    <property type="entry name" value="Vac_ATP_synth_c_sf"/>
</dbReference>
<dbReference type="PANTHER" id="PTHR10137">
    <property type="entry name" value="V-TYPE PROTON ATPASE SUBUNIT C"/>
    <property type="match status" value="1"/>
</dbReference>
<dbReference type="PANTHER" id="PTHR10137:SF0">
    <property type="entry name" value="V-TYPE PROTON ATPASE SUBUNIT C"/>
    <property type="match status" value="1"/>
</dbReference>
<dbReference type="Pfam" id="PF03223">
    <property type="entry name" value="V-ATPase_C"/>
    <property type="match status" value="1"/>
</dbReference>
<dbReference type="SUPFAM" id="SSF118203">
    <property type="entry name" value="Vacuolar ATP synthase subunit C"/>
    <property type="match status" value="1"/>
</dbReference>
<sequence>MATALYTANDFILISLPQNAQPVTAPGSKTDSWFNETLIGGRAFVSDFKIPEFKIGSLDTLIVESEELSKVDNQIGASIGKIIEILQGLNETSTNAYRTLPINNMPVPEYLENFQWQTRKFKLDKSIKDLITLISNESSQLDADVRATYANYNSAKTNLAAAERKKTGDLSVRSLHDIVKPEDFVLNSEHLTTVLVAVPKSLKSDFEKSYETLSKNVVPASASVIAEDAEYVLFNVHLFKKNVQEFTTAAREKKFIPREFNYSEELIDQLKKEHDSAASLEQSLRVQLVRLAKTAYVDVFINWFHIKALRVYVESVLRYGLPPHFNIKIIAVPPKNLSKCKSELIDAFGFLGGNAFMKDKKGKINKQDTSLHQYASLVDTEYEPFVMYIINL</sequence>
<comment type="function">
    <text evidence="1 2 6 7 9">Subunit of the V1 complex of vacuolar(H+)-ATPase (V-ATPase), a multisubunit enzyme composed of a peripheral complex (V1) that hydrolyzes ATP and a membrane integral complex (V0) that translocates protons (PubMed:10781598, PubMed:11777935, PubMed:1730668, PubMed:8416931). V-ATPase is responsible for acidifying and maintaining the pH of intracellular compartments (PubMed:8416931). Subunit C is necessary for the assembly of the catalytic sector of the enzyme and is likely to have a specific function in its catalytic activity (PubMed:15792803). Reversibly leaves the enzyme after glucose depletion, causing the catalytic subcomplex V1 to detach from the V0 section (PubMed:15792803).</text>
</comment>
<comment type="subunit">
    <text evidence="5 8">V-ATPase is a heteromultimeric enzyme composed of a peripheral catalytic V1 complex (components A to H) attached to an integral membrane V0 proton pore complex (components: a, c, c', c'', d, e, f and VOA1) (PubMed:25971514). Interacts directly with VMA4 (PubMed:15751969).</text>
</comment>
<comment type="interaction">
    <interactant intactId="EBI-20260">
        <id>P31412</id>
    </interactant>
    <interactant intactId="EBI-20201">
        <id>P32366</id>
        <label>VMA6</label>
    </interactant>
    <organismsDiffer>false</organismsDiffer>
    <experiments>5</experiments>
</comment>
<comment type="subcellular location">
    <subcellularLocation>
        <location evidence="3">Vacuole membrane</location>
        <topology evidence="3">Peripheral membrane protein</topology>
        <orientation evidence="13">Cytoplasmic side</orientation>
    </subcellularLocation>
</comment>
<comment type="miscellaneous">
    <text evidence="4">Present with 21114 molecules/cell in log phase SD medium.</text>
</comment>
<comment type="similarity">
    <text evidence="13">Belongs to the V-ATPase C subunit family.</text>
</comment>
<comment type="sequence caution" evidence="13">
    <conflict type="frameshift">
        <sequence resource="EMBL-CDS" id="AAA34440"/>
    </conflict>
</comment>
<gene>
    <name evidence="12" type="primary">VMA5</name>
    <name type="synonym">VAT3</name>
    <name type="synonym">VATC</name>
    <name type="ordered locus">YKL080W</name>
    <name type="ORF">YKL410</name>
</gene>
<keyword id="KW-0002">3D-structure</keyword>
<keyword id="KW-0007">Acetylation</keyword>
<keyword id="KW-0067">ATP-binding</keyword>
<keyword id="KW-0903">Direct protein sequencing</keyword>
<keyword id="KW-0375">Hydrogen ion transport</keyword>
<keyword id="KW-0406">Ion transport</keyword>
<keyword id="KW-0472">Membrane</keyword>
<keyword id="KW-0547">Nucleotide-binding</keyword>
<keyword id="KW-1185">Reference proteome</keyword>
<keyword id="KW-0813">Transport</keyword>
<keyword id="KW-0926">Vacuole</keyword>
<proteinExistence type="evidence at protein level"/>
<reference key="1">
    <citation type="journal article" date="1992" name="J. Biol. Chem.">
        <title>Cloning and mutational analysis of the gene encoding subunit C of yeast vacuolar H(+)-ATPase.</title>
        <authorList>
            <person name="Beltran C."/>
            <person name="Kopecky J."/>
            <person name="Pan Y.-C.E."/>
            <person name="Nelson H."/>
            <person name="Nelson N."/>
        </authorList>
    </citation>
    <scope>NUCLEOTIDE SEQUENCE [GENOMIC DNA]</scope>
    <scope>PROTEIN SEQUENCE OF 99-117</scope>
    <scope>FUNCTION</scope>
</reference>
<reference key="2">
    <citation type="journal article" date="1993" name="J. Biol. Chem.">
        <title>Isolation of vacuolar membrane H(+)-ATPase-deficient yeast mutants; the VMA5 and VMA4 genes are essential for assembly and activity of the vacuolar H(+)-ATPase.</title>
        <authorList>
            <person name="Ho M.N."/>
            <person name="Hill K.J."/>
            <person name="Lindorfer M.A."/>
            <person name="Stevens T.H."/>
        </authorList>
    </citation>
    <scope>NUCLEOTIDE SEQUENCE [GENOMIC DNA]</scope>
    <scope>PROTEIN SEQUENCE OF 99-111; 147-156; 242-251 AND 311-318</scope>
    <scope>FUNCTION</scope>
</reference>
<reference key="3">
    <citation type="journal article" date="1994" name="Yeast">
        <title>Sequence analysis of a 10 kb fragment of yeast chromosome XI identifies the SMY1 locus and reveals sequences related to a pre-mRNA splicing factor and vacuolar ATPase subunit C plus a number of unidentified open reading frames.</title>
        <authorList>
            <person name="James C.M."/>
            <person name="Gent M.E."/>
            <person name="Indge K.J."/>
            <person name="Oliver S.G."/>
        </authorList>
    </citation>
    <scope>NUCLEOTIDE SEQUENCE [GENOMIC DNA]</scope>
</reference>
<reference key="4">
    <citation type="journal article" date="1994" name="Nature">
        <title>Complete DNA sequence of yeast chromosome XI.</title>
        <authorList>
            <person name="Dujon B."/>
            <person name="Alexandraki D."/>
            <person name="Andre B."/>
            <person name="Ansorge W."/>
            <person name="Baladron V."/>
            <person name="Ballesta J.P.G."/>
            <person name="Banrevi A."/>
            <person name="Bolle P.-A."/>
            <person name="Bolotin-Fukuhara M."/>
            <person name="Bossier P."/>
            <person name="Bou G."/>
            <person name="Boyer J."/>
            <person name="Buitrago M.J."/>
            <person name="Cheret G."/>
            <person name="Colleaux L."/>
            <person name="Daignan-Fornier B."/>
            <person name="del Rey F."/>
            <person name="Dion C."/>
            <person name="Domdey H."/>
            <person name="Duesterhoeft A."/>
            <person name="Duesterhus S."/>
            <person name="Entian K.-D."/>
            <person name="Erfle H."/>
            <person name="Esteban P.F."/>
            <person name="Feldmann H."/>
            <person name="Fernandes L."/>
            <person name="Fobo G.M."/>
            <person name="Fritz C."/>
            <person name="Fukuhara H."/>
            <person name="Gabel C."/>
            <person name="Gaillon L."/>
            <person name="Garcia-Cantalejo J.M."/>
            <person name="Garcia-Ramirez J.J."/>
            <person name="Gent M.E."/>
            <person name="Ghazvini M."/>
            <person name="Goffeau A."/>
            <person name="Gonzalez A."/>
            <person name="Grothues D."/>
            <person name="Guerreiro P."/>
            <person name="Hegemann J.H."/>
            <person name="Hewitt N."/>
            <person name="Hilger F."/>
            <person name="Hollenberg C.P."/>
            <person name="Horaitis O."/>
            <person name="Indge K.J."/>
            <person name="Jacquier A."/>
            <person name="James C.M."/>
            <person name="Jauniaux J.-C."/>
            <person name="Jimenez A."/>
            <person name="Keuchel H."/>
            <person name="Kirchrath L."/>
            <person name="Kleine K."/>
            <person name="Koetter P."/>
            <person name="Legrain P."/>
            <person name="Liebl S."/>
            <person name="Louis E.J."/>
            <person name="Maia e Silva A."/>
            <person name="Marck C."/>
            <person name="Monnier A.-L."/>
            <person name="Moestl D."/>
            <person name="Mueller S."/>
            <person name="Obermaier B."/>
            <person name="Oliver S.G."/>
            <person name="Pallier C."/>
            <person name="Pascolo S."/>
            <person name="Pfeiffer F."/>
            <person name="Philippsen P."/>
            <person name="Planta R.J."/>
            <person name="Pohl F.M."/>
            <person name="Pohl T.M."/>
            <person name="Poehlmann R."/>
            <person name="Portetelle D."/>
            <person name="Purnelle B."/>
            <person name="Puzos V."/>
            <person name="Ramezani Rad M."/>
            <person name="Rasmussen S.W."/>
            <person name="Remacha M.A."/>
            <person name="Revuelta J.L."/>
            <person name="Richard G.-F."/>
            <person name="Rieger M."/>
            <person name="Rodrigues-Pousada C."/>
            <person name="Rose M."/>
            <person name="Rupp T."/>
            <person name="Santos M.A."/>
            <person name="Schwager C."/>
            <person name="Sensen C."/>
            <person name="Skala J."/>
            <person name="Soares H."/>
            <person name="Sor F."/>
            <person name="Stegemann J."/>
            <person name="Tettelin H."/>
            <person name="Thierry A."/>
            <person name="Tzermia M."/>
            <person name="Urrestarazu L.A."/>
            <person name="van Dyck L."/>
            <person name="van Vliet-Reedijk J.C."/>
            <person name="Valens M."/>
            <person name="Vandenbol M."/>
            <person name="Vilela C."/>
            <person name="Vissers S."/>
            <person name="von Wettstein D."/>
            <person name="Voss H."/>
            <person name="Wiemann S."/>
            <person name="Xu G."/>
            <person name="Zimmermann J."/>
            <person name="Haasemann M."/>
            <person name="Becker I."/>
            <person name="Mewes H.-W."/>
        </authorList>
    </citation>
    <scope>NUCLEOTIDE SEQUENCE [LARGE SCALE GENOMIC DNA]</scope>
    <source>
        <strain>ATCC 204508 / S288c</strain>
    </source>
</reference>
<reference key="5">
    <citation type="journal article" date="2014" name="G3 (Bethesda)">
        <title>The reference genome sequence of Saccharomyces cerevisiae: Then and now.</title>
        <authorList>
            <person name="Engel S.R."/>
            <person name="Dietrich F.S."/>
            <person name="Fisk D.G."/>
            <person name="Binkley G."/>
            <person name="Balakrishnan R."/>
            <person name="Costanzo M.C."/>
            <person name="Dwight S.S."/>
            <person name="Hitz B.C."/>
            <person name="Karra K."/>
            <person name="Nash R.S."/>
            <person name="Weng S."/>
            <person name="Wong E.D."/>
            <person name="Lloyd P."/>
            <person name="Skrzypek M.S."/>
            <person name="Miyasato S.R."/>
            <person name="Simison M."/>
            <person name="Cherry J.M."/>
        </authorList>
    </citation>
    <scope>GENOME REANNOTATION</scope>
    <source>
        <strain>ATCC 204508 / S288c</strain>
    </source>
</reference>
<reference key="6">
    <citation type="submission" date="2005-06" db="UniProtKB">
        <authorList>
            <person name="Bienvenut W.V."/>
            <person name="Peters C."/>
        </authorList>
    </citation>
    <scope>PROTEIN SEQUENCE OF 2-70; 82-98; 126-146; 157-164; 209-215; 242-251; 259-285; 319-328 AND 342-358</scope>
    <scope>CLEAVAGE OF INITIATOR METHIONINE</scope>
    <scope>ACETYLATION AT ALA-2</scope>
    <scope>IDENTIFICATION BY MASS SPECTROMETRY</scope>
</reference>
<reference key="7">
    <citation type="journal article" date="2005" name="FEBS Lett.">
        <title>Evidence for major structural changes in subunit C of the vacuolar ATPase due to nucleotide binding.</title>
        <authorList>
            <person name="Armbruester A."/>
            <person name="Hohn C."/>
            <person name="Hermesdorf A."/>
            <person name="Schumacher K."/>
            <person name="Boersch M."/>
            <person name="Grueber G."/>
        </authorList>
    </citation>
    <scope>PROTEIN SEQUENCE OF 106-115 AND 358-365</scope>
    <scope>NUCLEOTIDE-BINDING</scope>
    <scope>FUNCTION</scope>
</reference>
<reference key="8">
    <citation type="journal article" date="2000" name="J. Biol. Chem.">
        <title>The H subunit (Vma13p) of the yeast V-ATPase inhibits the ATPase activity of cytosolic V1 complexes.</title>
        <authorList>
            <person name="Parra K.J."/>
            <person name="Keenan K.L."/>
            <person name="Kane P.M."/>
        </authorList>
    </citation>
    <scope>FUNCTION</scope>
</reference>
<reference key="9">
    <citation type="journal article" date="2002" name="J. Biol. Chem.">
        <title>Mutational analysis of the subunit C (Vma5p) of the yeast vacuolar H+-ATPase.</title>
        <authorList>
            <person name="Curtis K.K."/>
            <person name="Francis S.A."/>
            <person name="Oluwatosin Y."/>
            <person name="Kane P.M."/>
        </authorList>
    </citation>
    <scope>FUNCTION</scope>
    <scope>MUTAGENESIS OF PHE-255</scope>
</reference>
<reference key="10">
    <citation type="journal article" date="2003" name="Nature">
        <title>Global analysis of protein localization in budding yeast.</title>
        <authorList>
            <person name="Huh W.-K."/>
            <person name="Falvo J.V."/>
            <person name="Gerke L.C."/>
            <person name="Carroll A.S."/>
            <person name="Howson R.W."/>
            <person name="Weissman J.S."/>
            <person name="O'Shea E.K."/>
        </authorList>
    </citation>
    <scope>SUBCELLULAR LOCATION [LARGE SCALE ANALYSIS]</scope>
</reference>
<reference key="11">
    <citation type="journal article" date="2003" name="Nature">
        <title>Global analysis of protein expression in yeast.</title>
        <authorList>
            <person name="Ghaemmaghami S."/>
            <person name="Huh W.-K."/>
            <person name="Bower K."/>
            <person name="Howson R.W."/>
            <person name="Belle A."/>
            <person name="Dephoure N."/>
            <person name="O'Shea E.K."/>
            <person name="Weissman J.S."/>
        </authorList>
    </citation>
    <scope>LEVEL OF PROTEIN EXPRESSION [LARGE SCALE ANALYSIS]</scope>
</reference>
<reference key="12">
    <citation type="journal article" date="2005" name="Biochemistry">
        <title>Defined sites of interaction between subunits E (Vma4p), C (Vma5p), and G (Vma10p) within the stator structure of the vacuolar H(+)-ATPase.</title>
        <authorList>
            <person name="Jones R.P.O."/>
            <person name="Durose L.J."/>
            <person name="Findlay J.B.C."/>
            <person name="Harrison M.A."/>
        </authorList>
    </citation>
    <scope>INTERACTION WITH VMA4</scope>
</reference>
<reference key="13">
    <citation type="journal article" date="2005" name="Biochemistry">
        <authorList>
            <person name="Jones R.P.O."/>
            <person name="Durose L.J."/>
            <person name="Findlay J.B.C."/>
            <person name="Harrison M.A."/>
        </authorList>
    </citation>
    <scope>ERRATUM OF PUBMED:15751969</scope>
</reference>
<reference key="14">
    <citation type="journal article" date="2009" name="Science">
        <title>Global analysis of Cdk1 substrate phosphorylation sites provides insights into evolution.</title>
        <authorList>
            <person name="Holt L.J."/>
            <person name="Tuch B.B."/>
            <person name="Villen J."/>
            <person name="Johnson A.D."/>
            <person name="Gygi S.P."/>
            <person name="Morgan D.O."/>
        </authorList>
    </citation>
    <scope>IDENTIFICATION BY MASS SPECTROMETRY [LARGE SCALE ANALYSIS]</scope>
</reference>
<reference key="15">
    <citation type="journal article" date="2004" name="EMBO Rep.">
        <title>Crystal structure of yeast V-ATPase subunit C reveals its stator function.</title>
        <authorList>
            <person name="Drory O."/>
            <person name="Frolow F."/>
            <person name="Nelson N."/>
        </authorList>
    </citation>
    <scope>X-RAY CRYSTALLOGRAPHY (1.75 ANGSTROMS)</scope>
</reference>
<reference evidence="14 15 16" key="16">
    <citation type="journal article" date="2015" name="Nature">
        <title>Electron cryomicroscopy observation of rotational states in a eukaryotic V-ATPase.</title>
        <authorList>
            <person name="Zhao J."/>
            <person name="Benlekbir S."/>
            <person name="Rubinstein J.L."/>
        </authorList>
    </citation>
    <scope>STRUCTURE BY ELECTRON MICROSCOPY (6.90 ANGSTROMS)</scope>
    <scope>IDENTIFICATION IN THE V-ATPASE COMPLEX</scope>
</reference>
<accession>P31412</accession>
<accession>D6VXK7</accession>
<evidence type="ECO:0000269" key="1">
    <source>
    </source>
</evidence>
<evidence type="ECO:0000269" key="2">
    <source>
    </source>
</evidence>
<evidence type="ECO:0000269" key="3">
    <source>
    </source>
</evidence>
<evidence type="ECO:0000269" key="4">
    <source>
    </source>
</evidence>
<evidence type="ECO:0000269" key="5">
    <source>
    </source>
</evidence>
<evidence type="ECO:0000269" key="6">
    <source>
    </source>
</evidence>
<evidence type="ECO:0000269" key="7">
    <source>
    </source>
</evidence>
<evidence type="ECO:0000269" key="8">
    <source>
    </source>
</evidence>
<evidence type="ECO:0000269" key="9">
    <source>
    </source>
</evidence>
<evidence type="ECO:0000269" key="10">
    <source ref="6"/>
</evidence>
<evidence type="ECO:0000303" key="11">
    <source>
    </source>
</evidence>
<evidence type="ECO:0000303" key="12">
    <source>
    </source>
</evidence>
<evidence type="ECO:0000305" key="13"/>
<evidence type="ECO:0007744" key="14">
    <source>
        <dbReference type="PDB" id="3J9T"/>
    </source>
</evidence>
<evidence type="ECO:0007744" key="15">
    <source>
        <dbReference type="PDB" id="3J9U"/>
    </source>
</evidence>
<evidence type="ECO:0007744" key="16">
    <source>
        <dbReference type="PDB" id="3J9V"/>
    </source>
</evidence>
<evidence type="ECO:0007829" key="17">
    <source>
        <dbReference type="PDB" id="1U7L"/>
    </source>
</evidence>
<evidence type="ECO:0007829" key="18">
    <source>
        <dbReference type="PDB" id="4DL0"/>
    </source>
</evidence>
<evidence type="ECO:0007829" key="19">
    <source>
        <dbReference type="PDB" id="7TMM"/>
    </source>
</evidence>
<feature type="initiator methionine" description="Removed" evidence="10">
    <location>
        <position position="1"/>
    </location>
</feature>
<feature type="chain" id="PRO_0000209358" description="V-type proton ATPase subunit C">
    <location>
        <begin position="2"/>
        <end position="392"/>
    </location>
</feature>
<feature type="modified residue" description="N-acetylalanine" evidence="10">
    <location>
        <position position="2"/>
    </location>
</feature>
<feature type="mutagenesis site" description="Is rapidly degraded and disrupts stable ATPase assembly." evidence="2">
    <original>F</original>
    <variation>A</variation>
    <location>
        <position position="255"/>
    </location>
</feature>
<feature type="strand" evidence="17">
    <location>
        <begin position="9"/>
        <end position="17"/>
    </location>
</feature>
<feature type="strand" evidence="19">
    <location>
        <begin position="23"/>
        <end position="25"/>
    </location>
</feature>
<feature type="helix" evidence="17">
    <location>
        <begin position="30"/>
        <end position="36"/>
    </location>
</feature>
<feature type="helix" evidence="17">
    <location>
        <begin position="38"/>
        <end position="41"/>
    </location>
</feature>
<feature type="strand" evidence="17">
    <location>
        <begin position="43"/>
        <end position="47"/>
    </location>
</feature>
<feature type="helix" evidence="17">
    <location>
        <begin position="58"/>
        <end position="60"/>
    </location>
</feature>
<feature type="helix" evidence="17">
    <location>
        <begin position="61"/>
        <end position="88"/>
    </location>
</feature>
<feature type="helix" evidence="19">
    <location>
        <begin position="90"/>
        <end position="93"/>
    </location>
</feature>
<feature type="strand" evidence="17">
    <location>
        <begin position="94"/>
        <end position="96"/>
    </location>
</feature>
<feature type="helix" evidence="19">
    <location>
        <begin position="102"/>
        <end position="104"/>
    </location>
</feature>
<feature type="helix" evidence="17">
    <location>
        <begin position="107"/>
        <end position="112"/>
    </location>
</feature>
<feature type="turn" evidence="17">
    <location>
        <begin position="118"/>
        <end position="120"/>
    </location>
</feature>
<feature type="helix" evidence="17">
    <location>
        <begin position="127"/>
        <end position="165"/>
    </location>
</feature>
<feature type="turn" evidence="17">
    <location>
        <begin position="170"/>
        <end position="172"/>
    </location>
</feature>
<feature type="turn" evidence="17">
    <location>
        <begin position="176"/>
        <end position="178"/>
    </location>
</feature>
<feature type="helix" evidence="17">
    <location>
        <begin position="181"/>
        <end position="183"/>
    </location>
</feature>
<feature type="strand" evidence="17">
    <location>
        <begin position="189"/>
        <end position="199"/>
    </location>
</feature>
<feature type="helix" evidence="17">
    <location>
        <begin position="200"/>
        <end position="202"/>
    </location>
</feature>
<feature type="helix" evidence="17">
    <location>
        <begin position="203"/>
        <end position="209"/>
    </location>
</feature>
<feature type="helix" evidence="17">
    <location>
        <begin position="210"/>
        <end position="212"/>
    </location>
</feature>
<feature type="strand" evidence="18">
    <location>
        <begin position="213"/>
        <end position="217"/>
    </location>
</feature>
<feature type="helix" evidence="19">
    <location>
        <begin position="219"/>
        <end position="221"/>
    </location>
</feature>
<feature type="strand" evidence="17">
    <location>
        <begin position="223"/>
        <end position="227"/>
    </location>
</feature>
<feature type="strand" evidence="17">
    <location>
        <begin position="229"/>
        <end position="239"/>
    </location>
</feature>
<feature type="helix" evidence="17">
    <location>
        <begin position="240"/>
        <end position="242"/>
    </location>
</feature>
<feature type="helix" evidence="17">
    <location>
        <begin position="243"/>
        <end position="252"/>
    </location>
</feature>
<feature type="strand" evidence="17">
    <location>
        <begin position="256"/>
        <end position="258"/>
    </location>
</feature>
<feature type="helix" evidence="17">
    <location>
        <begin position="264"/>
        <end position="319"/>
    </location>
</feature>
<feature type="strand" evidence="17">
    <location>
        <begin position="325"/>
        <end position="332"/>
    </location>
</feature>
<feature type="helix" evidence="19">
    <location>
        <begin position="334"/>
        <end position="336"/>
    </location>
</feature>
<feature type="helix" evidence="17">
    <location>
        <begin position="337"/>
        <end position="348"/>
    </location>
</feature>
<feature type="helix" evidence="17">
    <location>
        <begin position="349"/>
        <end position="352"/>
    </location>
</feature>
<feature type="strand" evidence="17">
    <location>
        <begin position="384"/>
        <end position="392"/>
    </location>
</feature>